<reference key="1">
    <citation type="journal article" date="2001" name="Nature">
        <title>Genome sequence of enterohaemorrhagic Escherichia coli O157:H7.</title>
        <authorList>
            <person name="Perna N.T."/>
            <person name="Plunkett G. III"/>
            <person name="Burland V."/>
            <person name="Mau B."/>
            <person name="Glasner J.D."/>
            <person name="Rose D.J."/>
            <person name="Mayhew G.F."/>
            <person name="Evans P.S."/>
            <person name="Gregor J."/>
            <person name="Kirkpatrick H.A."/>
            <person name="Posfai G."/>
            <person name="Hackett J."/>
            <person name="Klink S."/>
            <person name="Boutin A."/>
            <person name="Shao Y."/>
            <person name="Miller L."/>
            <person name="Grotbeck E.J."/>
            <person name="Davis N.W."/>
            <person name="Lim A."/>
            <person name="Dimalanta E.T."/>
            <person name="Potamousis K."/>
            <person name="Apodaca J."/>
            <person name="Anantharaman T.S."/>
            <person name="Lin J."/>
            <person name="Yen G."/>
            <person name="Schwartz D.C."/>
            <person name="Welch R.A."/>
            <person name="Blattner F.R."/>
        </authorList>
    </citation>
    <scope>NUCLEOTIDE SEQUENCE [LARGE SCALE GENOMIC DNA]</scope>
    <source>
        <strain>O157:H7 / EDL933 / ATCC 700927 / EHEC</strain>
    </source>
</reference>
<reference key="2">
    <citation type="journal article" date="2001" name="DNA Res.">
        <title>Complete genome sequence of enterohemorrhagic Escherichia coli O157:H7 and genomic comparison with a laboratory strain K-12.</title>
        <authorList>
            <person name="Hayashi T."/>
            <person name="Makino K."/>
            <person name="Ohnishi M."/>
            <person name="Kurokawa K."/>
            <person name="Ishii K."/>
            <person name="Yokoyama K."/>
            <person name="Han C.-G."/>
            <person name="Ohtsubo E."/>
            <person name="Nakayama K."/>
            <person name="Murata T."/>
            <person name="Tanaka M."/>
            <person name="Tobe T."/>
            <person name="Iida T."/>
            <person name="Takami H."/>
            <person name="Honda T."/>
            <person name="Sasakawa C."/>
            <person name="Ogasawara N."/>
            <person name="Yasunaga T."/>
            <person name="Kuhara S."/>
            <person name="Shiba T."/>
            <person name="Hattori M."/>
            <person name="Shinagawa H."/>
        </authorList>
    </citation>
    <scope>NUCLEOTIDE SEQUENCE [LARGE SCALE GENOMIC DNA]</scope>
    <source>
        <strain>O157:H7 / Sakai / RIMD 0509952 / EHEC</strain>
    </source>
</reference>
<comment type="function">
    <text evidence="2">Protease subunit of a proteasome-like degradation complex believed to be a general protein degrading machinery.</text>
</comment>
<comment type="catalytic activity">
    <reaction evidence="2">
        <text>ATP-dependent cleavage of peptide bonds with broad specificity.</text>
        <dbReference type="EC" id="3.4.25.2"/>
    </reaction>
</comment>
<comment type="activity regulation">
    <text evidence="2">Allosterically activated by HslU binding.</text>
</comment>
<comment type="subunit">
    <text evidence="2">A double ring-shaped homohexamer of HslV is capped on each side by a ring-shaped HslU homohexamer. The assembly of the HslU/HslV complex is dependent on binding of ATP.</text>
</comment>
<comment type="subcellular location">
    <subcellularLocation>
        <location evidence="2">Cytoplasm</location>
    </subcellularLocation>
</comment>
<comment type="induction">
    <text evidence="2">By heat shock.</text>
</comment>
<comment type="similarity">
    <text evidence="2">Belongs to the peptidase T1B family. HslV subfamily.</text>
</comment>
<keyword id="KW-0021">Allosteric enzyme</keyword>
<keyword id="KW-0963">Cytoplasm</keyword>
<keyword id="KW-0378">Hydrolase</keyword>
<keyword id="KW-0479">Metal-binding</keyword>
<keyword id="KW-0645">Protease</keyword>
<keyword id="KW-1185">Reference proteome</keyword>
<keyword id="KW-0915">Sodium</keyword>
<keyword id="KW-0346">Stress response</keyword>
<keyword id="KW-0888">Threonine protease</keyword>
<accession>P0A7C0</accession>
<accession>P31059</accession>
<accession>P97542</accession>
<name>HSLV_ECO57</name>
<sequence length="176" mass="19093">MTTIVSVRRNGHVVIAGDGQATLGNTVMKGNVKKVRRLYNDKVIAGFAGGTADAFTLFELFERKLEMHQGHLVKAAVELAKDWRTDRMLRKLEALLAVADETASLIITGNGDVVQPENDLIAIGSGGPYAQAAARALLENTELSAREIAEKALDIAGDICIYTNHFHTIEELSYKA</sequence>
<proteinExistence type="inferred from homology"/>
<dbReference type="EC" id="3.4.25.2" evidence="2"/>
<dbReference type="EMBL" id="AE005174">
    <property type="protein sequence ID" value="AAG59127.1"/>
    <property type="molecule type" value="Genomic_DNA"/>
</dbReference>
<dbReference type="EMBL" id="BA000007">
    <property type="protein sequence ID" value="BAB38282.1"/>
    <property type="molecule type" value="Genomic_DNA"/>
</dbReference>
<dbReference type="PIR" id="C86083">
    <property type="entry name" value="C86083"/>
</dbReference>
<dbReference type="PIR" id="C91236">
    <property type="entry name" value="C91236"/>
</dbReference>
<dbReference type="RefSeq" id="NP_312886.1">
    <property type="nucleotide sequence ID" value="NC_002695.1"/>
</dbReference>
<dbReference type="RefSeq" id="WP_000208242.1">
    <property type="nucleotide sequence ID" value="NZ_VOAI01000016.1"/>
</dbReference>
<dbReference type="SMR" id="P0A7C0"/>
<dbReference type="STRING" id="155864.Z5479"/>
<dbReference type="MEROPS" id="T01.006"/>
<dbReference type="GeneID" id="915032"/>
<dbReference type="GeneID" id="93777966"/>
<dbReference type="KEGG" id="ece:Z5479"/>
<dbReference type="KEGG" id="ecs:ECs_4859"/>
<dbReference type="PATRIC" id="fig|386585.9.peg.5081"/>
<dbReference type="eggNOG" id="COG5405">
    <property type="taxonomic scope" value="Bacteria"/>
</dbReference>
<dbReference type="HOGENOM" id="CLU_093872_1_0_6"/>
<dbReference type="OMA" id="WRTDKML"/>
<dbReference type="BRENDA" id="3.4.25.2">
    <property type="organism ID" value="2026"/>
</dbReference>
<dbReference type="Proteomes" id="UP000000558">
    <property type="component" value="Chromosome"/>
</dbReference>
<dbReference type="Proteomes" id="UP000002519">
    <property type="component" value="Chromosome"/>
</dbReference>
<dbReference type="GO" id="GO:0009376">
    <property type="term" value="C:HslUV protease complex"/>
    <property type="evidence" value="ECO:0007669"/>
    <property type="project" value="UniProtKB-UniRule"/>
</dbReference>
<dbReference type="GO" id="GO:0005839">
    <property type="term" value="C:proteasome core complex"/>
    <property type="evidence" value="ECO:0007669"/>
    <property type="project" value="InterPro"/>
</dbReference>
<dbReference type="GO" id="GO:0046872">
    <property type="term" value="F:metal ion binding"/>
    <property type="evidence" value="ECO:0007669"/>
    <property type="project" value="UniProtKB-KW"/>
</dbReference>
<dbReference type="GO" id="GO:0004298">
    <property type="term" value="F:threonine-type endopeptidase activity"/>
    <property type="evidence" value="ECO:0007669"/>
    <property type="project" value="UniProtKB-KW"/>
</dbReference>
<dbReference type="GO" id="GO:0051603">
    <property type="term" value="P:proteolysis involved in protein catabolic process"/>
    <property type="evidence" value="ECO:0007669"/>
    <property type="project" value="InterPro"/>
</dbReference>
<dbReference type="CDD" id="cd01913">
    <property type="entry name" value="protease_HslV"/>
    <property type="match status" value="1"/>
</dbReference>
<dbReference type="FunFam" id="3.60.20.10:FF:000002">
    <property type="entry name" value="ATP-dependent protease subunit HslV"/>
    <property type="match status" value="1"/>
</dbReference>
<dbReference type="Gene3D" id="3.60.20.10">
    <property type="entry name" value="Glutamine Phosphoribosylpyrophosphate, subunit 1, domain 1"/>
    <property type="match status" value="1"/>
</dbReference>
<dbReference type="HAMAP" id="MF_00248">
    <property type="entry name" value="HslV"/>
    <property type="match status" value="1"/>
</dbReference>
<dbReference type="InterPro" id="IPR022281">
    <property type="entry name" value="ATP-dep_Prtase_HsIV_su"/>
</dbReference>
<dbReference type="InterPro" id="IPR029055">
    <property type="entry name" value="Ntn_hydrolases_N"/>
</dbReference>
<dbReference type="InterPro" id="IPR001353">
    <property type="entry name" value="Proteasome_sua/b"/>
</dbReference>
<dbReference type="InterPro" id="IPR023333">
    <property type="entry name" value="Proteasome_suB-type"/>
</dbReference>
<dbReference type="NCBIfam" id="TIGR03692">
    <property type="entry name" value="ATP_dep_HslV"/>
    <property type="match status" value="1"/>
</dbReference>
<dbReference type="NCBIfam" id="NF003964">
    <property type="entry name" value="PRK05456.1"/>
    <property type="match status" value="1"/>
</dbReference>
<dbReference type="PANTHER" id="PTHR32194:SF0">
    <property type="entry name" value="ATP-DEPENDENT PROTEASE SUBUNIT HSLV"/>
    <property type="match status" value="1"/>
</dbReference>
<dbReference type="PANTHER" id="PTHR32194">
    <property type="entry name" value="METALLOPROTEASE TLDD"/>
    <property type="match status" value="1"/>
</dbReference>
<dbReference type="Pfam" id="PF00227">
    <property type="entry name" value="Proteasome"/>
    <property type="match status" value="1"/>
</dbReference>
<dbReference type="PIRSF" id="PIRSF039093">
    <property type="entry name" value="HslV"/>
    <property type="match status" value="1"/>
</dbReference>
<dbReference type="SUPFAM" id="SSF56235">
    <property type="entry name" value="N-terminal nucleophile aminohydrolases (Ntn hydrolases)"/>
    <property type="match status" value="1"/>
</dbReference>
<dbReference type="PROSITE" id="PS51476">
    <property type="entry name" value="PROTEASOME_BETA_2"/>
    <property type="match status" value="1"/>
</dbReference>
<feature type="initiator methionine" description="Removed" evidence="1">
    <location>
        <position position="1"/>
    </location>
</feature>
<feature type="chain" id="PRO_0000148106" description="ATP-dependent protease subunit HslV">
    <location>
        <begin position="2"/>
        <end position="176"/>
    </location>
</feature>
<feature type="active site" evidence="2">
    <location>
        <position position="2"/>
    </location>
</feature>
<feature type="binding site" evidence="2">
    <location>
        <position position="157"/>
    </location>
    <ligand>
        <name>Na(+)</name>
        <dbReference type="ChEBI" id="CHEBI:29101"/>
    </ligand>
</feature>
<feature type="binding site" evidence="2">
    <location>
        <position position="160"/>
    </location>
    <ligand>
        <name>Na(+)</name>
        <dbReference type="ChEBI" id="CHEBI:29101"/>
    </ligand>
</feature>
<feature type="binding site" evidence="2">
    <location>
        <position position="163"/>
    </location>
    <ligand>
        <name>Na(+)</name>
        <dbReference type="ChEBI" id="CHEBI:29101"/>
    </ligand>
</feature>
<protein>
    <recommendedName>
        <fullName evidence="2">ATP-dependent protease subunit HslV</fullName>
        <ecNumber evidence="2">3.4.25.2</ecNumber>
    </recommendedName>
    <alternativeName>
        <fullName evidence="2">Heat shock protein HslV</fullName>
    </alternativeName>
</protein>
<gene>
    <name evidence="2" type="primary">hslV</name>
    <name type="ordered locus">Z5479</name>
    <name type="ordered locus">ECs4859</name>
</gene>
<evidence type="ECO:0000250" key="1"/>
<evidence type="ECO:0000255" key="2">
    <source>
        <dbReference type="HAMAP-Rule" id="MF_00248"/>
    </source>
</evidence>
<organism>
    <name type="scientific">Escherichia coli O157:H7</name>
    <dbReference type="NCBI Taxonomy" id="83334"/>
    <lineage>
        <taxon>Bacteria</taxon>
        <taxon>Pseudomonadati</taxon>
        <taxon>Pseudomonadota</taxon>
        <taxon>Gammaproteobacteria</taxon>
        <taxon>Enterobacterales</taxon>
        <taxon>Enterobacteriaceae</taxon>
        <taxon>Escherichia</taxon>
    </lineage>
</organism>